<evidence type="ECO:0000305" key="1"/>
<organism>
    <name type="scientific">Arabidopsis thaliana</name>
    <name type="common">Mouse-ear cress</name>
    <dbReference type="NCBI Taxonomy" id="3702"/>
    <lineage>
        <taxon>Eukaryota</taxon>
        <taxon>Viridiplantae</taxon>
        <taxon>Streptophyta</taxon>
        <taxon>Embryophyta</taxon>
        <taxon>Tracheophyta</taxon>
        <taxon>Spermatophyta</taxon>
        <taxon>Magnoliopsida</taxon>
        <taxon>eudicotyledons</taxon>
        <taxon>Gunneridae</taxon>
        <taxon>Pentapetalae</taxon>
        <taxon>rosids</taxon>
        <taxon>malvids</taxon>
        <taxon>Brassicales</taxon>
        <taxon>Brassicaceae</taxon>
        <taxon>Camelineae</taxon>
        <taxon>Arabidopsis</taxon>
    </lineage>
</organism>
<reference key="1">
    <citation type="journal article" date="2000" name="Nature">
        <title>Sequence and analysis of chromosome 3 of the plant Arabidopsis thaliana.</title>
        <authorList>
            <person name="Salanoubat M."/>
            <person name="Lemcke K."/>
            <person name="Rieger M."/>
            <person name="Ansorge W."/>
            <person name="Unseld M."/>
            <person name="Fartmann B."/>
            <person name="Valle G."/>
            <person name="Bloecker H."/>
            <person name="Perez-Alonso M."/>
            <person name="Obermaier B."/>
            <person name="Delseny M."/>
            <person name="Boutry M."/>
            <person name="Grivell L.A."/>
            <person name="Mache R."/>
            <person name="Puigdomenech P."/>
            <person name="De Simone V."/>
            <person name="Choisne N."/>
            <person name="Artiguenave F."/>
            <person name="Robert C."/>
            <person name="Brottier P."/>
            <person name="Wincker P."/>
            <person name="Cattolico L."/>
            <person name="Weissenbach J."/>
            <person name="Saurin W."/>
            <person name="Quetier F."/>
            <person name="Schaefer M."/>
            <person name="Mueller-Auer S."/>
            <person name="Gabel C."/>
            <person name="Fuchs M."/>
            <person name="Benes V."/>
            <person name="Wurmbach E."/>
            <person name="Drzonek H."/>
            <person name="Erfle H."/>
            <person name="Jordan N."/>
            <person name="Bangert S."/>
            <person name="Wiedelmann R."/>
            <person name="Kranz H."/>
            <person name="Voss H."/>
            <person name="Holland R."/>
            <person name="Brandt P."/>
            <person name="Nyakatura G."/>
            <person name="Vezzi A."/>
            <person name="D'Angelo M."/>
            <person name="Pallavicini A."/>
            <person name="Toppo S."/>
            <person name="Simionati B."/>
            <person name="Conrad A."/>
            <person name="Hornischer K."/>
            <person name="Kauer G."/>
            <person name="Loehnert T.-H."/>
            <person name="Nordsiek G."/>
            <person name="Reichelt J."/>
            <person name="Scharfe M."/>
            <person name="Schoen O."/>
            <person name="Bargues M."/>
            <person name="Terol J."/>
            <person name="Climent J."/>
            <person name="Navarro P."/>
            <person name="Collado C."/>
            <person name="Perez-Perez A."/>
            <person name="Ottenwaelder B."/>
            <person name="Duchemin D."/>
            <person name="Cooke R."/>
            <person name="Laudie M."/>
            <person name="Berger-Llauro C."/>
            <person name="Purnelle B."/>
            <person name="Masuy D."/>
            <person name="de Haan M."/>
            <person name="Maarse A.C."/>
            <person name="Alcaraz J.-P."/>
            <person name="Cottet A."/>
            <person name="Casacuberta E."/>
            <person name="Monfort A."/>
            <person name="Argiriou A."/>
            <person name="Flores M."/>
            <person name="Liguori R."/>
            <person name="Vitale D."/>
            <person name="Mannhaupt G."/>
            <person name="Haase D."/>
            <person name="Schoof H."/>
            <person name="Rudd S."/>
            <person name="Zaccaria P."/>
            <person name="Mewes H.-W."/>
            <person name="Mayer K.F.X."/>
            <person name="Kaul S."/>
            <person name="Town C.D."/>
            <person name="Koo H.L."/>
            <person name="Tallon L.J."/>
            <person name="Jenkins J."/>
            <person name="Rooney T."/>
            <person name="Rizzo M."/>
            <person name="Walts A."/>
            <person name="Utterback T."/>
            <person name="Fujii C.Y."/>
            <person name="Shea T.P."/>
            <person name="Creasy T.H."/>
            <person name="Haas B."/>
            <person name="Maiti R."/>
            <person name="Wu D."/>
            <person name="Peterson J."/>
            <person name="Van Aken S."/>
            <person name="Pai G."/>
            <person name="Militscher J."/>
            <person name="Sellers P."/>
            <person name="Gill J.E."/>
            <person name="Feldblyum T.V."/>
            <person name="Preuss D."/>
            <person name="Lin X."/>
            <person name="Nierman W.C."/>
            <person name="Salzberg S.L."/>
            <person name="White O."/>
            <person name="Venter J.C."/>
            <person name="Fraser C.M."/>
            <person name="Kaneko T."/>
            <person name="Nakamura Y."/>
            <person name="Sato S."/>
            <person name="Kato T."/>
            <person name="Asamizu E."/>
            <person name="Sasamoto S."/>
            <person name="Kimura T."/>
            <person name="Idesawa K."/>
            <person name="Kawashima K."/>
            <person name="Kishida Y."/>
            <person name="Kiyokawa C."/>
            <person name="Kohara M."/>
            <person name="Matsumoto M."/>
            <person name="Matsuno A."/>
            <person name="Muraki A."/>
            <person name="Nakayama S."/>
            <person name="Nakazaki N."/>
            <person name="Shinpo S."/>
            <person name="Takeuchi C."/>
            <person name="Wada T."/>
            <person name="Watanabe A."/>
            <person name="Yamada M."/>
            <person name="Yasuda M."/>
            <person name="Tabata S."/>
        </authorList>
    </citation>
    <scope>NUCLEOTIDE SEQUENCE [LARGE SCALE GENOMIC DNA]</scope>
    <source>
        <strain>cv. Columbia</strain>
    </source>
</reference>
<reference key="2">
    <citation type="journal article" date="2017" name="Plant J.">
        <title>Araport11: a complete reannotation of the Arabidopsis thaliana reference genome.</title>
        <authorList>
            <person name="Cheng C.Y."/>
            <person name="Krishnakumar V."/>
            <person name="Chan A.P."/>
            <person name="Thibaud-Nissen F."/>
            <person name="Schobel S."/>
            <person name="Town C.D."/>
        </authorList>
    </citation>
    <scope>GENOME REANNOTATION</scope>
    <source>
        <strain>cv. Columbia</strain>
    </source>
</reference>
<reference key="3">
    <citation type="journal article" date="2004" name="Plant Cell">
        <title>Genome-wide analysis of Arabidopsis pentatricopeptide repeat proteins reveals their essential role in organelle biogenesis.</title>
        <authorList>
            <person name="Lurin C."/>
            <person name="Andres C."/>
            <person name="Aubourg S."/>
            <person name="Bellaoui M."/>
            <person name="Bitton F."/>
            <person name="Bruyere C."/>
            <person name="Caboche M."/>
            <person name="Debast C."/>
            <person name="Gualberto J."/>
            <person name="Hoffmann B."/>
            <person name="Lecharny A."/>
            <person name="Le Ret M."/>
            <person name="Martin-Magniette M.-L."/>
            <person name="Mireau H."/>
            <person name="Peeters N."/>
            <person name="Renou J.-P."/>
            <person name="Szurek B."/>
            <person name="Taconnat L."/>
            <person name="Small I."/>
        </authorList>
    </citation>
    <scope>GENE FAMILY</scope>
</reference>
<proteinExistence type="inferred from homology"/>
<feature type="chain" id="PRO_0000356073" description="Putative pentatricopeptide repeat-containing protein At3g05240">
    <location>
        <begin position="1"/>
        <end position="565"/>
    </location>
</feature>
<feature type="repeat" description="PPR 1">
    <location>
        <begin position="37"/>
        <end position="70"/>
    </location>
</feature>
<feature type="repeat" description="PPR 2">
    <location>
        <begin position="71"/>
        <end position="105"/>
    </location>
</feature>
<feature type="repeat" description="PPR 3">
    <location>
        <begin position="106"/>
        <end position="140"/>
    </location>
</feature>
<feature type="repeat" description="PPR 4">
    <location>
        <begin position="141"/>
        <end position="171"/>
    </location>
</feature>
<feature type="repeat" description="PPR 5">
    <location>
        <begin position="172"/>
        <end position="206"/>
    </location>
</feature>
<feature type="repeat" description="PPR 6">
    <location>
        <begin position="207"/>
        <end position="241"/>
    </location>
</feature>
<feature type="repeat" description="PPR 7">
    <location>
        <begin position="250"/>
        <end position="280"/>
    </location>
</feature>
<feature type="repeat" description="PPR 8">
    <location>
        <begin position="281"/>
        <end position="315"/>
    </location>
</feature>
<feature type="repeat" description="PPR 9">
    <location>
        <begin position="316"/>
        <end position="350"/>
    </location>
</feature>
<feature type="repeat" description="PPR 10">
    <location>
        <begin position="351"/>
        <end position="381"/>
    </location>
</feature>
<feature type="repeat" description="PPR 12">
    <location>
        <begin position="382"/>
        <end position="416"/>
    </location>
</feature>
<feature type="repeat" description="PPR 13">
    <location>
        <begin position="418"/>
        <end position="448"/>
    </location>
</feature>
<feature type="repeat" description="PPR 14">
    <location>
        <begin position="454"/>
        <end position="484"/>
    </location>
</feature>
<feature type="region of interest" description="Type E motif">
    <location>
        <begin position="489"/>
        <end position="564"/>
    </location>
</feature>
<keyword id="KW-1185">Reference proteome</keyword>
<keyword id="KW-0677">Repeat</keyword>
<gene>
    <name type="primary">PCMP-E82</name>
    <name type="ordered locus">At3g05240</name>
    <name type="ORF">T12H1.21</name>
</gene>
<name>PP214_ARATH</name>
<sequence>MMKKHYKPILSQLENCRSLVELNQLHGLMIKSSVIRNVIPLSRLIDFCTTCPETMNLSYARSVFESIDCPSVYIWNSMIRGYSNSPNPDKALIFYQEMLRKGYSPDYFTFPYVLKACSGLRDIQFGSCVHGFVVKTGFEVNMYVSTCLLHMYMCCGEVNYGLRVFEDIPQWNVVAWGSLISGFVNNNRFSDAIEAFREMQSNGVKANETIMVDLLVACGRCKDIVTGKWFHGFLQGLGFDPYFQSKVGFNVILATSLIDMYAKCGDLRTARYLFDGMPERTLVSWNSIITGYSQNGDAEEALCMFLDMLDLGIAPDKVTFLSVIRASMIQGCSQLGQSIHAYVSKTGFVKDAAIVCALVNMYAKTGDAESAKKAFEDLEKKDTIAWTVVIIGLASHGHGNEALSIFQRMQEKGNATPDGITYLGVLYACSHIGLVEEGQRYFAEMRDLHGLEPTVEHYGCMVDILSRAGRFEEAERLVKTMPVKPNVNIWGALLNGCDIHENLELTDRIRSMVAEPEELGSGIYVLLSNIYAKAGRWADVKLIRESMKSKRVDKVLGHSSVETMF</sequence>
<protein>
    <recommendedName>
        <fullName>Putative pentatricopeptide repeat-containing protein At3g05240</fullName>
    </recommendedName>
</protein>
<comment type="similarity">
    <text evidence="1">Belongs to the PPR family. PCMP-E subfamily.</text>
</comment>
<comment type="sequence caution" evidence="1">
    <conflict type="erroneous gene model prediction">
        <sequence resource="EMBL-CDS" id="AAF27030"/>
    </conflict>
</comment>
<comment type="online information" name="Pentatricopeptide repeat proteins">
    <link uri="https://ppr.plantenergy.uwa.edu.au"/>
</comment>
<accession>Q9MA95</accession>
<dbReference type="EMBL" id="AC009177">
    <property type="protein sequence ID" value="AAF27030.1"/>
    <property type="status" value="ALT_SEQ"/>
    <property type="molecule type" value="Genomic_DNA"/>
</dbReference>
<dbReference type="EMBL" id="CP002686">
    <property type="protein sequence ID" value="AEE74210.1"/>
    <property type="molecule type" value="Genomic_DNA"/>
</dbReference>
<dbReference type="SMR" id="Q9MA95"/>
<dbReference type="BioGRID" id="5023">
    <property type="interactions" value="1"/>
</dbReference>
<dbReference type="STRING" id="3702.Q9MA95"/>
<dbReference type="PaxDb" id="3702-AT3G05240.1"/>
<dbReference type="EnsemblPlants" id="AT3G05240.1">
    <property type="protein sequence ID" value="AT3G05240.1"/>
    <property type="gene ID" value="AT3G05240"/>
</dbReference>
<dbReference type="GeneID" id="819688"/>
<dbReference type="Gramene" id="AT3G05240.1">
    <property type="protein sequence ID" value="AT3G05240.1"/>
    <property type="gene ID" value="AT3G05240"/>
</dbReference>
<dbReference type="KEGG" id="ath:AT3G05240"/>
<dbReference type="Araport" id="AT3G05240"/>
<dbReference type="TAIR" id="AT3G05240">
    <property type="gene designation" value="MEF19"/>
</dbReference>
<dbReference type="eggNOG" id="KOG4197">
    <property type="taxonomic scope" value="Eukaryota"/>
</dbReference>
<dbReference type="HOGENOM" id="CLU_002706_37_2_1"/>
<dbReference type="InParanoid" id="Q9MA95"/>
<dbReference type="OMA" id="EPNIAIW"/>
<dbReference type="PhylomeDB" id="Q9MA95"/>
<dbReference type="PRO" id="PR:Q9MA95"/>
<dbReference type="Proteomes" id="UP000006548">
    <property type="component" value="Chromosome 3"/>
</dbReference>
<dbReference type="ExpressionAtlas" id="Q9MA95">
    <property type="expression patterns" value="differential"/>
</dbReference>
<dbReference type="GO" id="GO:0005739">
    <property type="term" value="C:mitochondrion"/>
    <property type="evidence" value="ECO:0007669"/>
    <property type="project" value="GOC"/>
</dbReference>
<dbReference type="GO" id="GO:0003723">
    <property type="term" value="F:RNA binding"/>
    <property type="evidence" value="ECO:0007669"/>
    <property type="project" value="InterPro"/>
</dbReference>
<dbReference type="GO" id="GO:0080156">
    <property type="term" value="P:mitochondrial mRNA modification"/>
    <property type="evidence" value="ECO:0000315"/>
    <property type="project" value="TAIR"/>
</dbReference>
<dbReference type="FunFam" id="1.25.40.10:FF:000880">
    <property type="entry name" value="Pentatricopeptide (PPR) repeat-containing protein-like"/>
    <property type="match status" value="1"/>
</dbReference>
<dbReference type="FunFam" id="1.25.40.10:FF:000417">
    <property type="entry name" value="Pentatricopeptide repeat-containing protein At4g38010"/>
    <property type="match status" value="1"/>
</dbReference>
<dbReference type="FunFam" id="1.25.40.10:FF:000073">
    <property type="entry name" value="Pentatricopeptide repeat-containing protein chloroplastic"/>
    <property type="match status" value="1"/>
</dbReference>
<dbReference type="FunFam" id="1.25.40.10:FF:001485">
    <property type="entry name" value="Putative pentatricopeptide repeat-containing protein At3g05240"/>
    <property type="match status" value="1"/>
</dbReference>
<dbReference type="FunFam" id="1.25.40.10:FF:002104">
    <property type="entry name" value="Putative pentatricopeptide repeat-containing protein At3g05240"/>
    <property type="match status" value="1"/>
</dbReference>
<dbReference type="Gene3D" id="1.25.40.10">
    <property type="entry name" value="Tetratricopeptide repeat domain"/>
    <property type="match status" value="5"/>
</dbReference>
<dbReference type="InterPro" id="IPR046848">
    <property type="entry name" value="E_motif"/>
</dbReference>
<dbReference type="InterPro" id="IPR002885">
    <property type="entry name" value="Pentatricopeptide_rpt"/>
</dbReference>
<dbReference type="InterPro" id="IPR046960">
    <property type="entry name" value="PPR_At4g14850-like_plant"/>
</dbReference>
<dbReference type="InterPro" id="IPR011990">
    <property type="entry name" value="TPR-like_helical_dom_sf"/>
</dbReference>
<dbReference type="NCBIfam" id="TIGR00756">
    <property type="entry name" value="PPR"/>
    <property type="match status" value="6"/>
</dbReference>
<dbReference type="PANTHER" id="PTHR47926:SF344">
    <property type="entry name" value="OS07G0636900 PROTEIN"/>
    <property type="match status" value="1"/>
</dbReference>
<dbReference type="PANTHER" id="PTHR47926">
    <property type="entry name" value="PENTATRICOPEPTIDE REPEAT-CONTAINING PROTEIN"/>
    <property type="match status" value="1"/>
</dbReference>
<dbReference type="Pfam" id="PF20431">
    <property type="entry name" value="E_motif"/>
    <property type="match status" value="1"/>
</dbReference>
<dbReference type="Pfam" id="PF01535">
    <property type="entry name" value="PPR"/>
    <property type="match status" value="5"/>
</dbReference>
<dbReference type="Pfam" id="PF13041">
    <property type="entry name" value="PPR_2"/>
    <property type="match status" value="3"/>
</dbReference>
<dbReference type="PROSITE" id="PS51375">
    <property type="entry name" value="PPR"/>
    <property type="match status" value="13"/>
</dbReference>